<keyword id="KW-0963">Cytoplasm</keyword>
<keyword id="KW-0342">GTP-binding</keyword>
<keyword id="KW-0378">Hydrolase</keyword>
<keyword id="KW-0460">Magnesium</keyword>
<keyword id="KW-0479">Metal-binding</keyword>
<keyword id="KW-0547">Nucleotide-binding</keyword>
<keyword id="KW-0630">Potassium</keyword>
<keyword id="KW-0819">tRNA processing</keyword>
<accession>A1U7J3</accession>
<protein>
    <recommendedName>
        <fullName evidence="1">tRNA modification GTPase MnmE</fullName>
        <ecNumber evidence="1">3.6.-.-</ecNumber>
    </recommendedName>
</protein>
<proteinExistence type="inferred from homology"/>
<comment type="function">
    <text evidence="1">Exhibits a very high intrinsic GTPase hydrolysis rate. Involved in the addition of a carboxymethylaminomethyl (cmnm) group at the wobble position (U34) of certain tRNAs, forming tRNA-cmnm(5)s(2)U34.</text>
</comment>
<comment type="cofactor">
    <cofactor evidence="1">
        <name>K(+)</name>
        <dbReference type="ChEBI" id="CHEBI:29103"/>
    </cofactor>
    <text evidence="1">Binds 1 potassium ion per subunit.</text>
</comment>
<comment type="subunit">
    <text evidence="1">Homodimer. Heterotetramer of two MnmE and two MnmG subunits.</text>
</comment>
<comment type="subcellular location">
    <subcellularLocation>
        <location evidence="1">Cytoplasm</location>
    </subcellularLocation>
</comment>
<comment type="similarity">
    <text evidence="1">Belongs to the TRAFAC class TrmE-Era-EngA-EngB-Septin-like GTPase superfamily. TrmE GTPase family.</text>
</comment>
<organism>
    <name type="scientific">Marinobacter nauticus (strain ATCC 700491 / DSM 11845 / VT8)</name>
    <name type="common">Marinobacter aquaeolei</name>
    <dbReference type="NCBI Taxonomy" id="351348"/>
    <lineage>
        <taxon>Bacteria</taxon>
        <taxon>Pseudomonadati</taxon>
        <taxon>Pseudomonadota</taxon>
        <taxon>Gammaproteobacteria</taxon>
        <taxon>Pseudomonadales</taxon>
        <taxon>Marinobacteraceae</taxon>
        <taxon>Marinobacter</taxon>
    </lineage>
</organism>
<dbReference type="EC" id="3.6.-.-" evidence="1"/>
<dbReference type="EMBL" id="CP000514">
    <property type="protein sequence ID" value="ABM20962.1"/>
    <property type="molecule type" value="Genomic_DNA"/>
</dbReference>
<dbReference type="RefSeq" id="WP_011787295.1">
    <property type="nucleotide sequence ID" value="NC_008740.1"/>
</dbReference>
<dbReference type="SMR" id="A1U7J3"/>
<dbReference type="STRING" id="351348.Maqu_3894"/>
<dbReference type="KEGG" id="maq:Maqu_3894"/>
<dbReference type="eggNOG" id="COG0486">
    <property type="taxonomic scope" value="Bacteria"/>
</dbReference>
<dbReference type="HOGENOM" id="CLU_019624_4_1_6"/>
<dbReference type="OrthoDB" id="9805918at2"/>
<dbReference type="Proteomes" id="UP000000998">
    <property type="component" value="Chromosome"/>
</dbReference>
<dbReference type="GO" id="GO:0005829">
    <property type="term" value="C:cytosol"/>
    <property type="evidence" value="ECO:0007669"/>
    <property type="project" value="TreeGrafter"/>
</dbReference>
<dbReference type="GO" id="GO:0005525">
    <property type="term" value="F:GTP binding"/>
    <property type="evidence" value="ECO:0007669"/>
    <property type="project" value="UniProtKB-UniRule"/>
</dbReference>
<dbReference type="GO" id="GO:0003924">
    <property type="term" value="F:GTPase activity"/>
    <property type="evidence" value="ECO:0007669"/>
    <property type="project" value="UniProtKB-UniRule"/>
</dbReference>
<dbReference type="GO" id="GO:0046872">
    <property type="term" value="F:metal ion binding"/>
    <property type="evidence" value="ECO:0007669"/>
    <property type="project" value="UniProtKB-KW"/>
</dbReference>
<dbReference type="GO" id="GO:0030488">
    <property type="term" value="P:tRNA methylation"/>
    <property type="evidence" value="ECO:0007669"/>
    <property type="project" value="TreeGrafter"/>
</dbReference>
<dbReference type="GO" id="GO:0002098">
    <property type="term" value="P:tRNA wobble uridine modification"/>
    <property type="evidence" value="ECO:0007669"/>
    <property type="project" value="TreeGrafter"/>
</dbReference>
<dbReference type="CDD" id="cd04164">
    <property type="entry name" value="trmE"/>
    <property type="match status" value="1"/>
</dbReference>
<dbReference type="CDD" id="cd14858">
    <property type="entry name" value="TrmE_N"/>
    <property type="match status" value="1"/>
</dbReference>
<dbReference type="FunFam" id="3.30.1360.120:FF:000001">
    <property type="entry name" value="tRNA modification GTPase MnmE"/>
    <property type="match status" value="1"/>
</dbReference>
<dbReference type="FunFam" id="3.40.50.300:FF:000249">
    <property type="entry name" value="tRNA modification GTPase MnmE"/>
    <property type="match status" value="1"/>
</dbReference>
<dbReference type="Gene3D" id="3.40.50.300">
    <property type="entry name" value="P-loop containing nucleotide triphosphate hydrolases"/>
    <property type="match status" value="1"/>
</dbReference>
<dbReference type="Gene3D" id="3.30.1360.120">
    <property type="entry name" value="Probable tRNA modification gtpase trme, domain 1"/>
    <property type="match status" value="1"/>
</dbReference>
<dbReference type="Gene3D" id="1.20.120.430">
    <property type="entry name" value="tRNA modification GTPase MnmE domain 2"/>
    <property type="match status" value="1"/>
</dbReference>
<dbReference type="HAMAP" id="MF_00379">
    <property type="entry name" value="GTPase_MnmE"/>
    <property type="match status" value="1"/>
</dbReference>
<dbReference type="InterPro" id="IPR031168">
    <property type="entry name" value="G_TrmE"/>
</dbReference>
<dbReference type="InterPro" id="IPR006073">
    <property type="entry name" value="GTP-bd"/>
</dbReference>
<dbReference type="InterPro" id="IPR018948">
    <property type="entry name" value="GTP-bd_TrmE_N"/>
</dbReference>
<dbReference type="InterPro" id="IPR004520">
    <property type="entry name" value="GTPase_MnmE"/>
</dbReference>
<dbReference type="InterPro" id="IPR027368">
    <property type="entry name" value="MnmE_dom2"/>
</dbReference>
<dbReference type="InterPro" id="IPR025867">
    <property type="entry name" value="MnmE_helical"/>
</dbReference>
<dbReference type="InterPro" id="IPR027417">
    <property type="entry name" value="P-loop_NTPase"/>
</dbReference>
<dbReference type="InterPro" id="IPR005225">
    <property type="entry name" value="Small_GTP-bd"/>
</dbReference>
<dbReference type="InterPro" id="IPR027266">
    <property type="entry name" value="TrmE/GcvT_dom1"/>
</dbReference>
<dbReference type="NCBIfam" id="TIGR00450">
    <property type="entry name" value="mnmE_trmE_thdF"/>
    <property type="match status" value="1"/>
</dbReference>
<dbReference type="NCBIfam" id="NF003661">
    <property type="entry name" value="PRK05291.1-3"/>
    <property type="match status" value="1"/>
</dbReference>
<dbReference type="NCBIfam" id="TIGR00231">
    <property type="entry name" value="small_GTP"/>
    <property type="match status" value="1"/>
</dbReference>
<dbReference type="PANTHER" id="PTHR42714">
    <property type="entry name" value="TRNA MODIFICATION GTPASE GTPBP3"/>
    <property type="match status" value="1"/>
</dbReference>
<dbReference type="PANTHER" id="PTHR42714:SF2">
    <property type="entry name" value="TRNA MODIFICATION GTPASE GTPBP3, MITOCHONDRIAL"/>
    <property type="match status" value="1"/>
</dbReference>
<dbReference type="Pfam" id="PF01926">
    <property type="entry name" value="MMR_HSR1"/>
    <property type="match status" value="1"/>
</dbReference>
<dbReference type="Pfam" id="PF12631">
    <property type="entry name" value="MnmE_helical"/>
    <property type="match status" value="1"/>
</dbReference>
<dbReference type="Pfam" id="PF10396">
    <property type="entry name" value="TrmE_N"/>
    <property type="match status" value="1"/>
</dbReference>
<dbReference type="SUPFAM" id="SSF52540">
    <property type="entry name" value="P-loop containing nucleoside triphosphate hydrolases"/>
    <property type="match status" value="1"/>
</dbReference>
<dbReference type="SUPFAM" id="SSF116878">
    <property type="entry name" value="TrmE connector domain"/>
    <property type="match status" value="1"/>
</dbReference>
<dbReference type="PROSITE" id="PS51709">
    <property type="entry name" value="G_TRME"/>
    <property type="match status" value="1"/>
</dbReference>
<sequence length="456" mass="49404">MQPATDTIAAIATAPGQAGVGIVRVSGPRAMAIARTMLGFEPKPRYAHYGPFRDRQGELIDEGIGLYFPNPHSFTGEDVFELQGHGGTVILDILLREVCSLGARLARPGEFSERAFLNDKLDLAQAEAIADLIESSSEQAARCAVRSMQGVFSKRVDNLVEAITHLRIYVEAAIDFPEEEIDFLADGKVASDLQGLLEQVQQILGEAQQGTILRDGMKVVIAGRPNAGKSSLLNALAGREAAIVTAIEGTTRDVLREHIHIDGMPLHIIDTAGLRDSPDEVEQIGIARAWEEIRQADRILLMVDATTTDKTEPHEIWPDFIDQLPRSAPVTVIRNKVDLSGEPLGISAESHQTAPVIRLAAKAAEGLEVLREHLKECIGFASTTEGGFLARRRHLDALERARDSLLQGQTQLEGYGAGELLAEDLRAAQDALGEITGHLTPDELLGKIFSSFCIGK</sequence>
<evidence type="ECO:0000255" key="1">
    <source>
        <dbReference type="HAMAP-Rule" id="MF_00379"/>
    </source>
</evidence>
<name>MNME_MARN8</name>
<feature type="chain" id="PRO_1000048840" description="tRNA modification GTPase MnmE">
    <location>
        <begin position="1"/>
        <end position="456"/>
    </location>
</feature>
<feature type="domain" description="TrmE-type G">
    <location>
        <begin position="216"/>
        <end position="379"/>
    </location>
</feature>
<feature type="binding site" evidence="1">
    <location>
        <position position="24"/>
    </location>
    <ligand>
        <name>(6S)-5-formyl-5,6,7,8-tetrahydrofolate</name>
        <dbReference type="ChEBI" id="CHEBI:57457"/>
    </ligand>
</feature>
<feature type="binding site" evidence="1">
    <location>
        <position position="81"/>
    </location>
    <ligand>
        <name>(6S)-5-formyl-5,6,7,8-tetrahydrofolate</name>
        <dbReference type="ChEBI" id="CHEBI:57457"/>
    </ligand>
</feature>
<feature type="binding site" evidence="1">
    <location>
        <position position="120"/>
    </location>
    <ligand>
        <name>(6S)-5-formyl-5,6,7,8-tetrahydrofolate</name>
        <dbReference type="ChEBI" id="CHEBI:57457"/>
    </ligand>
</feature>
<feature type="binding site" evidence="1">
    <location>
        <begin position="226"/>
        <end position="231"/>
    </location>
    <ligand>
        <name>GTP</name>
        <dbReference type="ChEBI" id="CHEBI:37565"/>
    </ligand>
</feature>
<feature type="binding site" evidence="1">
    <location>
        <position position="226"/>
    </location>
    <ligand>
        <name>K(+)</name>
        <dbReference type="ChEBI" id="CHEBI:29103"/>
    </ligand>
</feature>
<feature type="binding site" evidence="1">
    <location>
        <position position="230"/>
    </location>
    <ligand>
        <name>Mg(2+)</name>
        <dbReference type="ChEBI" id="CHEBI:18420"/>
    </ligand>
</feature>
<feature type="binding site" evidence="1">
    <location>
        <begin position="245"/>
        <end position="251"/>
    </location>
    <ligand>
        <name>GTP</name>
        <dbReference type="ChEBI" id="CHEBI:37565"/>
    </ligand>
</feature>
<feature type="binding site" evidence="1">
    <location>
        <position position="245"/>
    </location>
    <ligand>
        <name>K(+)</name>
        <dbReference type="ChEBI" id="CHEBI:29103"/>
    </ligand>
</feature>
<feature type="binding site" evidence="1">
    <location>
        <position position="247"/>
    </location>
    <ligand>
        <name>K(+)</name>
        <dbReference type="ChEBI" id="CHEBI:29103"/>
    </ligand>
</feature>
<feature type="binding site" evidence="1">
    <location>
        <position position="250"/>
    </location>
    <ligand>
        <name>K(+)</name>
        <dbReference type="ChEBI" id="CHEBI:29103"/>
    </ligand>
</feature>
<feature type="binding site" evidence="1">
    <location>
        <position position="251"/>
    </location>
    <ligand>
        <name>Mg(2+)</name>
        <dbReference type="ChEBI" id="CHEBI:18420"/>
    </ligand>
</feature>
<feature type="binding site" evidence="1">
    <location>
        <begin position="270"/>
        <end position="273"/>
    </location>
    <ligand>
        <name>GTP</name>
        <dbReference type="ChEBI" id="CHEBI:37565"/>
    </ligand>
</feature>
<feature type="binding site" evidence="1">
    <location>
        <position position="456"/>
    </location>
    <ligand>
        <name>(6S)-5-formyl-5,6,7,8-tetrahydrofolate</name>
        <dbReference type="ChEBI" id="CHEBI:57457"/>
    </ligand>
</feature>
<reference key="1">
    <citation type="journal article" date="2011" name="Appl. Environ. Microbiol.">
        <title>Genomic potential of Marinobacter aquaeolei, a biogeochemical 'opportunitroph'.</title>
        <authorList>
            <person name="Singer E."/>
            <person name="Webb E.A."/>
            <person name="Nelson W.C."/>
            <person name="Heidelberg J.F."/>
            <person name="Ivanova N."/>
            <person name="Pati A."/>
            <person name="Edwards K.J."/>
        </authorList>
    </citation>
    <scope>NUCLEOTIDE SEQUENCE [LARGE SCALE GENOMIC DNA]</scope>
    <source>
        <strain>ATCC 700491 / DSM 11845 / VT8</strain>
    </source>
</reference>
<gene>
    <name evidence="1" type="primary">mnmE</name>
    <name evidence="1" type="synonym">trmE</name>
    <name type="ordered locus">Maqu_3894</name>
</gene>